<reference key="1">
    <citation type="journal article" date="2006" name="Genome Res.">
        <title>Skewed genomic variability in strains of the toxigenic bacterial pathogen, Clostridium perfringens.</title>
        <authorList>
            <person name="Myers G.S.A."/>
            <person name="Rasko D.A."/>
            <person name="Cheung J.K."/>
            <person name="Ravel J."/>
            <person name="Seshadri R."/>
            <person name="DeBoy R.T."/>
            <person name="Ren Q."/>
            <person name="Varga J."/>
            <person name="Awad M.M."/>
            <person name="Brinkac L.M."/>
            <person name="Daugherty S.C."/>
            <person name="Haft D.H."/>
            <person name="Dodson R.J."/>
            <person name="Madupu R."/>
            <person name="Nelson W.C."/>
            <person name="Rosovitz M.J."/>
            <person name="Sullivan S.A."/>
            <person name="Khouri H."/>
            <person name="Dimitrov G.I."/>
            <person name="Watkins K.L."/>
            <person name="Mulligan S."/>
            <person name="Benton J."/>
            <person name="Radune D."/>
            <person name="Fisher D.J."/>
            <person name="Atkins H.S."/>
            <person name="Hiscox T."/>
            <person name="Jost B.H."/>
            <person name="Billington S.J."/>
            <person name="Songer J.G."/>
            <person name="McClane B.A."/>
            <person name="Titball R.W."/>
            <person name="Rood J.I."/>
            <person name="Melville S.B."/>
            <person name="Paulsen I.T."/>
        </authorList>
    </citation>
    <scope>NUCLEOTIDE SEQUENCE [LARGE SCALE GENOMIC DNA]</scope>
    <source>
        <strain>SM101 / Type A</strain>
    </source>
</reference>
<dbReference type="EC" id="6.3.1.1" evidence="1"/>
<dbReference type="EMBL" id="CP000312">
    <property type="protein sequence ID" value="ABG87095.1"/>
    <property type="molecule type" value="Genomic_DNA"/>
</dbReference>
<dbReference type="RefSeq" id="WP_011592815.1">
    <property type="nucleotide sequence ID" value="NC_008262.1"/>
</dbReference>
<dbReference type="SMR" id="Q0SRK2"/>
<dbReference type="KEGG" id="cpr:CPR_1945"/>
<dbReference type="UniPathway" id="UPA00134">
    <property type="reaction ID" value="UER00194"/>
</dbReference>
<dbReference type="Proteomes" id="UP000001824">
    <property type="component" value="Chromosome"/>
</dbReference>
<dbReference type="GO" id="GO:0005829">
    <property type="term" value="C:cytosol"/>
    <property type="evidence" value="ECO:0007669"/>
    <property type="project" value="TreeGrafter"/>
</dbReference>
<dbReference type="GO" id="GO:0004071">
    <property type="term" value="F:aspartate-ammonia ligase activity"/>
    <property type="evidence" value="ECO:0007669"/>
    <property type="project" value="UniProtKB-UniRule"/>
</dbReference>
<dbReference type="GO" id="GO:0005524">
    <property type="term" value="F:ATP binding"/>
    <property type="evidence" value="ECO:0007669"/>
    <property type="project" value="UniProtKB-UniRule"/>
</dbReference>
<dbReference type="GO" id="GO:0140096">
    <property type="term" value="F:catalytic activity, acting on a protein"/>
    <property type="evidence" value="ECO:0007669"/>
    <property type="project" value="UniProtKB-ARBA"/>
</dbReference>
<dbReference type="GO" id="GO:0016740">
    <property type="term" value="F:transferase activity"/>
    <property type="evidence" value="ECO:0007669"/>
    <property type="project" value="UniProtKB-ARBA"/>
</dbReference>
<dbReference type="GO" id="GO:0070981">
    <property type="term" value="P:L-asparagine biosynthetic process"/>
    <property type="evidence" value="ECO:0007669"/>
    <property type="project" value="UniProtKB-UniRule"/>
</dbReference>
<dbReference type="CDD" id="cd00645">
    <property type="entry name" value="AsnA"/>
    <property type="match status" value="1"/>
</dbReference>
<dbReference type="Gene3D" id="3.30.930.10">
    <property type="entry name" value="Bira Bifunctional Protein, Domain 2"/>
    <property type="match status" value="1"/>
</dbReference>
<dbReference type="HAMAP" id="MF_00555">
    <property type="entry name" value="AsnA"/>
    <property type="match status" value="1"/>
</dbReference>
<dbReference type="InterPro" id="IPR006195">
    <property type="entry name" value="aa-tRNA-synth_II"/>
</dbReference>
<dbReference type="InterPro" id="IPR045864">
    <property type="entry name" value="aa-tRNA-synth_II/BPL/LPL"/>
</dbReference>
<dbReference type="InterPro" id="IPR004618">
    <property type="entry name" value="AsnA"/>
</dbReference>
<dbReference type="NCBIfam" id="TIGR00669">
    <property type="entry name" value="asnA"/>
    <property type="match status" value="1"/>
</dbReference>
<dbReference type="PANTHER" id="PTHR30073">
    <property type="entry name" value="ASPARTATE--AMMONIA LIGASE"/>
    <property type="match status" value="1"/>
</dbReference>
<dbReference type="PANTHER" id="PTHR30073:SF5">
    <property type="entry name" value="ASPARTATE--AMMONIA LIGASE"/>
    <property type="match status" value="1"/>
</dbReference>
<dbReference type="Pfam" id="PF03590">
    <property type="entry name" value="AsnA"/>
    <property type="match status" value="1"/>
</dbReference>
<dbReference type="PIRSF" id="PIRSF001555">
    <property type="entry name" value="Asp_ammon_ligase"/>
    <property type="match status" value="1"/>
</dbReference>
<dbReference type="SUPFAM" id="SSF55681">
    <property type="entry name" value="Class II aaRS and biotin synthetases"/>
    <property type="match status" value="1"/>
</dbReference>
<dbReference type="PROSITE" id="PS50862">
    <property type="entry name" value="AA_TRNA_LIGASE_II"/>
    <property type="match status" value="1"/>
</dbReference>
<name>ASNA_CLOPS</name>
<accession>Q0SRK2</accession>
<proteinExistence type="inferred from homology"/>
<sequence>MEKLFIPKDYKPLLSLRETEVAIKELKDFFEDSLAKNLNLTRVSAPLFVNKGSGLNDDLNGIERPVSFDMKAIPEFNIQIVHSLAKWKRLALHRYEFKHGEGLYTDMNAIRRDEDLDNIHSIYVDQWDWEKIIDKEERNLETLKETVRSIYSTFKATEDFIVSKYPHIEKILPEDITFITSQELEDRYPDLTSKERETAICKEFGAVFIIGIGGKLASGEKHDDRSPDYDDWTLNGDLLFYYPLFDEAVELSSMGIRVDEESLLKQLKIAECEERKELPFHQMLLEGKLPYTIGGGIGQSRICMFFLRKAHIGEVQASMWDEDMIRTCEENNIHLL</sequence>
<comment type="catalytic activity">
    <reaction evidence="1">
        <text>L-aspartate + NH4(+) + ATP = L-asparagine + AMP + diphosphate + H(+)</text>
        <dbReference type="Rhea" id="RHEA:11372"/>
        <dbReference type="ChEBI" id="CHEBI:15378"/>
        <dbReference type="ChEBI" id="CHEBI:28938"/>
        <dbReference type="ChEBI" id="CHEBI:29991"/>
        <dbReference type="ChEBI" id="CHEBI:30616"/>
        <dbReference type="ChEBI" id="CHEBI:33019"/>
        <dbReference type="ChEBI" id="CHEBI:58048"/>
        <dbReference type="ChEBI" id="CHEBI:456215"/>
        <dbReference type="EC" id="6.3.1.1"/>
    </reaction>
</comment>
<comment type="pathway">
    <text evidence="1">Amino-acid biosynthesis; L-asparagine biosynthesis; L-asparagine from L-aspartate (ammonia route): step 1/1.</text>
</comment>
<comment type="subcellular location">
    <subcellularLocation>
        <location evidence="1">Cytoplasm</location>
    </subcellularLocation>
</comment>
<comment type="similarity">
    <text evidence="1">Belongs to the class-II aminoacyl-tRNA synthetase family. AsnA subfamily.</text>
</comment>
<feature type="chain" id="PRO_1000017940" description="Aspartate--ammonia ligase">
    <location>
        <begin position="1"/>
        <end position="336"/>
    </location>
</feature>
<protein>
    <recommendedName>
        <fullName evidence="1">Aspartate--ammonia ligase</fullName>
        <ecNumber evidence="1">6.3.1.1</ecNumber>
    </recommendedName>
    <alternativeName>
        <fullName evidence="1">Asparagine synthetase A</fullName>
    </alternativeName>
</protein>
<gene>
    <name evidence="1" type="primary">asnA</name>
    <name type="ordered locus">CPR_1945</name>
</gene>
<organism>
    <name type="scientific">Clostridium perfringens (strain SM101 / Type A)</name>
    <dbReference type="NCBI Taxonomy" id="289380"/>
    <lineage>
        <taxon>Bacteria</taxon>
        <taxon>Bacillati</taxon>
        <taxon>Bacillota</taxon>
        <taxon>Clostridia</taxon>
        <taxon>Eubacteriales</taxon>
        <taxon>Clostridiaceae</taxon>
        <taxon>Clostridium</taxon>
    </lineage>
</organism>
<evidence type="ECO:0000255" key="1">
    <source>
        <dbReference type="HAMAP-Rule" id="MF_00555"/>
    </source>
</evidence>
<keyword id="KW-0028">Amino-acid biosynthesis</keyword>
<keyword id="KW-0061">Asparagine biosynthesis</keyword>
<keyword id="KW-0067">ATP-binding</keyword>
<keyword id="KW-0963">Cytoplasm</keyword>
<keyword id="KW-0436">Ligase</keyword>
<keyword id="KW-0547">Nucleotide-binding</keyword>